<evidence type="ECO:0000255" key="1"/>
<evidence type="ECO:0000305" key="2"/>
<dbReference type="EMBL" id="U00096">
    <property type="protein sequence ID" value="AAC74577.1"/>
    <property type="molecule type" value="Genomic_DNA"/>
</dbReference>
<dbReference type="EMBL" id="AP009048">
    <property type="protein sequence ID" value="BAA15177.1"/>
    <property type="molecule type" value="Genomic_DNA"/>
</dbReference>
<dbReference type="PIR" id="C64904">
    <property type="entry name" value="C64904"/>
</dbReference>
<dbReference type="RefSeq" id="NP_416021.1">
    <property type="nucleotide sequence ID" value="NC_000913.3"/>
</dbReference>
<dbReference type="RefSeq" id="WP_000876763.1">
    <property type="nucleotide sequence ID" value="NZ_SSZK01000001.1"/>
</dbReference>
<dbReference type="SMR" id="P77789"/>
<dbReference type="BioGRID" id="4263156">
    <property type="interactions" value="3"/>
</dbReference>
<dbReference type="FunCoup" id="P77789">
    <property type="interactions" value="16"/>
</dbReference>
<dbReference type="STRING" id="511145.b1504"/>
<dbReference type="PaxDb" id="511145-b1504"/>
<dbReference type="EnsemblBacteria" id="AAC74577">
    <property type="protein sequence ID" value="AAC74577"/>
    <property type="gene ID" value="b1504"/>
</dbReference>
<dbReference type="GeneID" id="946047"/>
<dbReference type="KEGG" id="ecj:JW1498"/>
<dbReference type="KEGG" id="eco:b1504"/>
<dbReference type="KEGG" id="ecoc:C3026_08705"/>
<dbReference type="PATRIC" id="fig|1411691.4.peg.762"/>
<dbReference type="EchoBASE" id="EB3562"/>
<dbReference type="eggNOG" id="COG3539">
    <property type="taxonomic scope" value="Bacteria"/>
</dbReference>
<dbReference type="HOGENOM" id="CLU_088965_0_2_6"/>
<dbReference type="InParanoid" id="P77789"/>
<dbReference type="OMA" id="PYSARMK"/>
<dbReference type="OrthoDB" id="6896277at2"/>
<dbReference type="PhylomeDB" id="P77789"/>
<dbReference type="BioCyc" id="EcoCyc:G6794-MONOMER"/>
<dbReference type="PRO" id="PR:P77789"/>
<dbReference type="Proteomes" id="UP000000625">
    <property type="component" value="Chromosome"/>
</dbReference>
<dbReference type="GO" id="GO:0009289">
    <property type="term" value="C:pilus"/>
    <property type="evidence" value="ECO:0000318"/>
    <property type="project" value="GO_Central"/>
</dbReference>
<dbReference type="GO" id="GO:0043709">
    <property type="term" value="P:cell adhesion involved in single-species biofilm formation"/>
    <property type="evidence" value="ECO:0000318"/>
    <property type="project" value="GO_Central"/>
</dbReference>
<dbReference type="Gene3D" id="2.60.40.1090">
    <property type="entry name" value="Fimbrial-type adhesion domain"/>
    <property type="match status" value="1"/>
</dbReference>
<dbReference type="InterPro" id="IPR000259">
    <property type="entry name" value="Adhesion_dom_fimbrial"/>
</dbReference>
<dbReference type="InterPro" id="IPR036937">
    <property type="entry name" value="Adhesion_dom_fimbrial_sf"/>
</dbReference>
<dbReference type="InterPro" id="IPR008966">
    <property type="entry name" value="Adhesion_dom_sf"/>
</dbReference>
<dbReference type="InterPro" id="IPR050263">
    <property type="entry name" value="Bact_Fimbrial_Adh_Pro"/>
</dbReference>
<dbReference type="PANTHER" id="PTHR33420">
    <property type="entry name" value="FIMBRIAL SUBUNIT ELFA-RELATED"/>
    <property type="match status" value="1"/>
</dbReference>
<dbReference type="PANTHER" id="PTHR33420:SF25">
    <property type="entry name" value="PROTEIN FIMF"/>
    <property type="match status" value="1"/>
</dbReference>
<dbReference type="Pfam" id="PF00419">
    <property type="entry name" value="Fimbrial"/>
    <property type="match status" value="1"/>
</dbReference>
<dbReference type="SUPFAM" id="SSF49401">
    <property type="entry name" value="Bacterial adhesins"/>
    <property type="match status" value="1"/>
</dbReference>
<organism>
    <name type="scientific">Escherichia coli (strain K12)</name>
    <dbReference type="NCBI Taxonomy" id="83333"/>
    <lineage>
        <taxon>Bacteria</taxon>
        <taxon>Pseudomonadati</taxon>
        <taxon>Pseudomonadota</taxon>
        <taxon>Gammaproteobacteria</taxon>
        <taxon>Enterobacterales</taxon>
        <taxon>Enterobacteriaceae</taxon>
        <taxon>Escherichia</taxon>
    </lineage>
</organism>
<feature type="signal peptide" evidence="1">
    <location>
        <begin position="1"/>
        <end position="22"/>
    </location>
</feature>
<feature type="chain" id="PRO_0000009259" description="Uncharacterized fimbrial-like protein YdeS">
    <location>
        <begin position="23"/>
        <end position="176"/>
    </location>
</feature>
<feature type="disulfide bond" evidence="2">
    <location>
        <begin position="38"/>
        <end position="78"/>
    </location>
</feature>
<accession>P77789</accession>
<sequence length="176" mass="18949">MKYNNIIFLGLCLGLTTYSALSADSVIKISGRVLDYGCTVSSDSLNFTVDLQKNSARQFPTTGSTSPAVPFQITLSECSKGTTGVRVAFNGIEDAENNTLLKLDEGSNTASGLGIEILDANMRPVKLNDLHAGMQWIPLVPEQNNILPYSARLKSTQKSVNPGLVRASATFTLEFQ</sequence>
<keyword id="KW-1015">Disulfide bond</keyword>
<keyword id="KW-0281">Fimbrium</keyword>
<keyword id="KW-1185">Reference proteome</keyword>
<keyword id="KW-0732">Signal</keyword>
<gene>
    <name type="primary">ydeS</name>
    <name type="ordered locus">b1504</name>
    <name type="ordered locus">JW1498</name>
</gene>
<name>YDES_ECOLI</name>
<comment type="subcellular location">
    <subcellularLocation>
        <location evidence="2">Fimbrium</location>
    </subcellularLocation>
</comment>
<comment type="similarity">
    <text evidence="2">Belongs to the fimbrial protein family.</text>
</comment>
<reference key="1">
    <citation type="journal article" date="1996" name="DNA Res.">
        <title>A 570-kb DNA sequence of the Escherichia coli K-12 genome corresponding to the 28.0-40.1 min region on the linkage map.</title>
        <authorList>
            <person name="Aiba H."/>
            <person name="Baba T."/>
            <person name="Fujita K."/>
            <person name="Hayashi K."/>
            <person name="Inada T."/>
            <person name="Isono K."/>
            <person name="Itoh T."/>
            <person name="Kasai H."/>
            <person name="Kashimoto K."/>
            <person name="Kimura S."/>
            <person name="Kitakawa M."/>
            <person name="Kitagawa M."/>
            <person name="Makino K."/>
            <person name="Miki T."/>
            <person name="Mizobuchi K."/>
            <person name="Mori H."/>
            <person name="Mori T."/>
            <person name="Motomura K."/>
            <person name="Nakade S."/>
            <person name="Nakamura Y."/>
            <person name="Nashimoto H."/>
            <person name="Nishio Y."/>
            <person name="Oshima T."/>
            <person name="Saito N."/>
            <person name="Sampei G."/>
            <person name="Seki Y."/>
            <person name="Sivasundaram S."/>
            <person name="Tagami H."/>
            <person name="Takeda J."/>
            <person name="Takemoto K."/>
            <person name="Takeuchi Y."/>
            <person name="Wada C."/>
            <person name="Yamamoto Y."/>
            <person name="Horiuchi T."/>
        </authorList>
    </citation>
    <scope>NUCLEOTIDE SEQUENCE [LARGE SCALE GENOMIC DNA]</scope>
    <source>
        <strain>K12 / W3110 / ATCC 27325 / DSM 5911</strain>
    </source>
</reference>
<reference key="2">
    <citation type="journal article" date="1997" name="Science">
        <title>The complete genome sequence of Escherichia coli K-12.</title>
        <authorList>
            <person name="Blattner F.R."/>
            <person name="Plunkett G. III"/>
            <person name="Bloch C.A."/>
            <person name="Perna N.T."/>
            <person name="Burland V."/>
            <person name="Riley M."/>
            <person name="Collado-Vides J."/>
            <person name="Glasner J.D."/>
            <person name="Rode C.K."/>
            <person name="Mayhew G.F."/>
            <person name="Gregor J."/>
            <person name="Davis N.W."/>
            <person name="Kirkpatrick H.A."/>
            <person name="Goeden M.A."/>
            <person name="Rose D.J."/>
            <person name="Mau B."/>
            <person name="Shao Y."/>
        </authorList>
    </citation>
    <scope>NUCLEOTIDE SEQUENCE [LARGE SCALE GENOMIC DNA]</scope>
    <source>
        <strain>K12 / MG1655 / ATCC 47076</strain>
    </source>
</reference>
<reference key="3">
    <citation type="journal article" date="2006" name="Mol. Syst. Biol.">
        <title>Highly accurate genome sequences of Escherichia coli K-12 strains MG1655 and W3110.</title>
        <authorList>
            <person name="Hayashi K."/>
            <person name="Morooka N."/>
            <person name="Yamamoto Y."/>
            <person name="Fujita K."/>
            <person name="Isono K."/>
            <person name="Choi S."/>
            <person name="Ohtsubo E."/>
            <person name="Baba T."/>
            <person name="Wanner B.L."/>
            <person name="Mori H."/>
            <person name="Horiuchi T."/>
        </authorList>
    </citation>
    <scope>NUCLEOTIDE SEQUENCE [LARGE SCALE GENOMIC DNA]</scope>
    <source>
        <strain>K12 / W3110 / ATCC 27325 / DSM 5911</strain>
    </source>
</reference>
<proteinExistence type="inferred from homology"/>
<protein>
    <recommendedName>
        <fullName>Uncharacterized fimbrial-like protein YdeS</fullName>
    </recommendedName>
</protein>